<dbReference type="EC" id="2.7.7.6" evidence="1"/>
<dbReference type="EMBL" id="CP000923">
    <property type="protein sequence ID" value="ABY92162.1"/>
    <property type="status" value="ALT_INIT"/>
    <property type="molecule type" value="Genomic_DNA"/>
</dbReference>
<dbReference type="RefSeq" id="WP_009052836.1">
    <property type="nucleotide sequence ID" value="NC_010320.1"/>
</dbReference>
<dbReference type="SMR" id="B0K5G9"/>
<dbReference type="KEGG" id="tex:Teth514_0860"/>
<dbReference type="HOGENOM" id="CLU_000524_3_0_9"/>
<dbReference type="Proteomes" id="UP000002155">
    <property type="component" value="Chromosome"/>
</dbReference>
<dbReference type="GO" id="GO:0000428">
    <property type="term" value="C:DNA-directed RNA polymerase complex"/>
    <property type="evidence" value="ECO:0007669"/>
    <property type="project" value="UniProtKB-KW"/>
</dbReference>
<dbReference type="GO" id="GO:0003677">
    <property type="term" value="F:DNA binding"/>
    <property type="evidence" value="ECO:0007669"/>
    <property type="project" value="UniProtKB-UniRule"/>
</dbReference>
<dbReference type="GO" id="GO:0003899">
    <property type="term" value="F:DNA-directed RNA polymerase activity"/>
    <property type="evidence" value="ECO:0007669"/>
    <property type="project" value="UniProtKB-UniRule"/>
</dbReference>
<dbReference type="GO" id="GO:0000287">
    <property type="term" value="F:magnesium ion binding"/>
    <property type="evidence" value="ECO:0007669"/>
    <property type="project" value="UniProtKB-UniRule"/>
</dbReference>
<dbReference type="GO" id="GO:0008270">
    <property type="term" value="F:zinc ion binding"/>
    <property type="evidence" value="ECO:0007669"/>
    <property type="project" value="UniProtKB-UniRule"/>
</dbReference>
<dbReference type="GO" id="GO:0006351">
    <property type="term" value="P:DNA-templated transcription"/>
    <property type="evidence" value="ECO:0007669"/>
    <property type="project" value="UniProtKB-UniRule"/>
</dbReference>
<dbReference type="CDD" id="cd02655">
    <property type="entry name" value="RNAP_beta'_C"/>
    <property type="match status" value="1"/>
</dbReference>
<dbReference type="CDD" id="cd01609">
    <property type="entry name" value="RNAP_beta'_N"/>
    <property type="match status" value="1"/>
</dbReference>
<dbReference type="FunFam" id="1.10.150.390:FF:000002">
    <property type="entry name" value="DNA-directed RNA polymerase subunit beta"/>
    <property type="match status" value="1"/>
</dbReference>
<dbReference type="FunFam" id="1.10.40.90:FF:000001">
    <property type="entry name" value="DNA-directed RNA polymerase subunit beta"/>
    <property type="match status" value="1"/>
</dbReference>
<dbReference type="FunFam" id="4.10.860.120:FF:000001">
    <property type="entry name" value="DNA-directed RNA polymerase subunit beta"/>
    <property type="match status" value="1"/>
</dbReference>
<dbReference type="Gene3D" id="1.10.132.30">
    <property type="match status" value="1"/>
</dbReference>
<dbReference type="Gene3D" id="1.10.150.390">
    <property type="match status" value="1"/>
</dbReference>
<dbReference type="Gene3D" id="1.10.1790.20">
    <property type="match status" value="1"/>
</dbReference>
<dbReference type="Gene3D" id="1.10.40.90">
    <property type="match status" value="1"/>
</dbReference>
<dbReference type="Gene3D" id="2.40.40.20">
    <property type="match status" value="1"/>
</dbReference>
<dbReference type="Gene3D" id="2.40.50.100">
    <property type="match status" value="1"/>
</dbReference>
<dbReference type="Gene3D" id="4.10.860.120">
    <property type="entry name" value="RNA polymerase II, clamp domain"/>
    <property type="match status" value="1"/>
</dbReference>
<dbReference type="Gene3D" id="1.10.274.100">
    <property type="entry name" value="RNA polymerase Rpb1, domain 3"/>
    <property type="match status" value="2"/>
</dbReference>
<dbReference type="HAMAP" id="MF_01322">
    <property type="entry name" value="RNApol_bact_RpoC"/>
    <property type="match status" value="1"/>
</dbReference>
<dbReference type="InterPro" id="IPR045867">
    <property type="entry name" value="DNA-dir_RpoC_beta_prime"/>
</dbReference>
<dbReference type="InterPro" id="IPR012754">
    <property type="entry name" value="DNA-dir_RpoC_beta_prime_bact"/>
</dbReference>
<dbReference type="InterPro" id="IPR000722">
    <property type="entry name" value="RNA_pol_asu"/>
</dbReference>
<dbReference type="InterPro" id="IPR006592">
    <property type="entry name" value="RNA_pol_N"/>
</dbReference>
<dbReference type="InterPro" id="IPR007080">
    <property type="entry name" value="RNA_pol_Rpb1_1"/>
</dbReference>
<dbReference type="InterPro" id="IPR007066">
    <property type="entry name" value="RNA_pol_Rpb1_3"/>
</dbReference>
<dbReference type="InterPro" id="IPR042102">
    <property type="entry name" value="RNA_pol_Rpb1_3_sf"/>
</dbReference>
<dbReference type="InterPro" id="IPR007083">
    <property type="entry name" value="RNA_pol_Rpb1_4"/>
</dbReference>
<dbReference type="InterPro" id="IPR007081">
    <property type="entry name" value="RNA_pol_Rpb1_5"/>
</dbReference>
<dbReference type="InterPro" id="IPR044893">
    <property type="entry name" value="RNA_pol_Rpb1_clamp_domain"/>
</dbReference>
<dbReference type="InterPro" id="IPR038120">
    <property type="entry name" value="Rpb1_funnel_sf"/>
</dbReference>
<dbReference type="NCBIfam" id="NF011498">
    <property type="entry name" value="PRK14906.1"/>
    <property type="match status" value="1"/>
</dbReference>
<dbReference type="NCBIfam" id="TIGR02386">
    <property type="entry name" value="rpoC_TIGR"/>
    <property type="match status" value="1"/>
</dbReference>
<dbReference type="PANTHER" id="PTHR19376">
    <property type="entry name" value="DNA-DIRECTED RNA POLYMERASE"/>
    <property type="match status" value="1"/>
</dbReference>
<dbReference type="PANTHER" id="PTHR19376:SF54">
    <property type="entry name" value="DNA-DIRECTED RNA POLYMERASE SUBUNIT BETA"/>
    <property type="match status" value="1"/>
</dbReference>
<dbReference type="Pfam" id="PF04997">
    <property type="entry name" value="RNA_pol_Rpb1_1"/>
    <property type="match status" value="1"/>
</dbReference>
<dbReference type="Pfam" id="PF00623">
    <property type="entry name" value="RNA_pol_Rpb1_2"/>
    <property type="match status" value="2"/>
</dbReference>
<dbReference type="Pfam" id="PF04983">
    <property type="entry name" value="RNA_pol_Rpb1_3"/>
    <property type="match status" value="1"/>
</dbReference>
<dbReference type="Pfam" id="PF05000">
    <property type="entry name" value="RNA_pol_Rpb1_4"/>
    <property type="match status" value="1"/>
</dbReference>
<dbReference type="Pfam" id="PF04998">
    <property type="entry name" value="RNA_pol_Rpb1_5"/>
    <property type="match status" value="2"/>
</dbReference>
<dbReference type="SMART" id="SM00663">
    <property type="entry name" value="RPOLA_N"/>
    <property type="match status" value="1"/>
</dbReference>
<dbReference type="SUPFAM" id="SSF64484">
    <property type="entry name" value="beta and beta-prime subunits of DNA dependent RNA-polymerase"/>
    <property type="match status" value="1"/>
</dbReference>
<feature type="chain" id="PRO_0000353447" description="DNA-directed RNA polymerase subunit beta'">
    <location>
        <begin position="1"/>
        <end position="1184"/>
    </location>
</feature>
<feature type="binding site" evidence="1">
    <location>
        <position position="60"/>
    </location>
    <ligand>
        <name>Zn(2+)</name>
        <dbReference type="ChEBI" id="CHEBI:29105"/>
        <label>1</label>
    </ligand>
</feature>
<feature type="binding site" evidence="1">
    <location>
        <position position="62"/>
    </location>
    <ligand>
        <name>Zn(2+)</name>
        <dbReference type="ChEBI" id="CHEBI:29105"/>
        <label>1</label>
    </ligand>
</feature>
<feature type="binding site" evidence="1">
    <location>
        <position position="75"/>
    </location>
    <ligand>
        <name>Zn(2+)</name>
        <dbReference type="ChEBI" id="CHEBI:29105"/>
        <label>1</label>
    </ligand>
</feature>
<feature type="binding site" evidence="1">
    <location>
        <position position="78"/>
    </location>
    <ligand>
        <name>Zn(2+)</name>
        <dbReference type="ChEBI" id="CHEBI:29105"/>
        <label>1</label>
    </ligand>
</feature>
<feature type="binding site" evidence="1">
    <location>
        <position position="449"/>
    </location>
    <ligand>
        <name>Mg(2+)</name>
        <dbReference type="ChEBI" id="CHEBI:18420"/>
    </ligand>
</feature>
<feature type="binding site" evidence="1">
    <location>
        <position position="451"/>
    </location>
    <ligand>
        <name>Mg(2+)</name>
        <dbReference type="ChEBI" id="CHEBI:18420"/>
    </ligand>
</feature>
<feature type="binding site" evidence="1">
    <location>
        <position position="453"/>
    </location>
    <ligand>
        <name>Mg(2+)</name>
        <dbReference type="ChEBI" id="CHEBI:18420"/>
    </ligand>
</feature>
<feature type="binding site" evidence="1">
    <location>
        <position position="794"/>
    </location>
    <ligand>
        <name>Zn(2+)</name>
        <dbReference type="ChEBI" id="CHEBI:29105"/>
        <label>2</label>
    </ligand>
</feature>
<feature type="binding site" evidence="1">
    <location>
        <position position="867"/>
    </location>
    <ligand>
        <name>Zn(2+)</name>
        <dbReference type="ChEBI" id="CHEBI:29105"/>
        <label>2</label>
    </ligand>
</feature>
<feature type="binding site" evidence="1">
    <location>
        <position position="874"/>
    </location>
    <ligand>
        <name>Zn(2+)</name>
        <dbReference type="ChEBI" id="CHEBI:29105"/>
        <label>2</label>
    </ligand>
</feature>
<feature type="binding site" evidence="1">
    <location>
        <position position="877"/>
    </location>
    <ligand>
        <name>Zn(2+)</name>
        <dbReference type="ChEBI" id="CHEBI:29105"/>
        <label>2</label>
    </ligand>
</feature>
<accession>B0K5G9</accession>
<keyword id="KW-0240">DNA-directed RNA polymerase</keyword>
<keyword id="KW-0460">Magnesium</keyword>
<keyword id="KW-0479">Metal-binding</keyword>
<keyword id="KW-0548">Nucleotidyltransferase</keyword>
<keyword id="KW-0804">Transcription</keyword>
<keyword id="KW-0808">Transferase</keyword>
<keyword id="KW-0862">Zinc</keyword>
<sequence>MFQLRNFEAIKIGLASPEKIREWSRGEVKKPETINYRTLKPERDGLFCERIFGPTKDWECHCGKYKRVRYKGVVCDRCGVEVTRSKVRRERMGHIELAAPVAHIWYVKGIPSRMGLLLDMSPRALEKVLYFVSYVVIDPGDTPLTKKQLLSEKEYREYLDKYGNKFRAGMGAEAIKELLQEIDLEKLSKELKAEIRESTGQKRVRAIRRLEVVQAFIDSGNRPEWMILDVIPVIPPDLRPMVQLDGGRFATSDLNDLYRRVINRNNRLKKLLDLGAPDIIVRNEKRMLQEAVDALIDNGRRGRPVTGPGNRPLKSLSDMLKGKQGRFRQNLLGKRVDYSGRSVIVVGPELKVYQCGLPKEMALELFKPFVMKKLVDEGLAQHIKSAKRMVEKIKPEVWDVLEEVIKEHPVLLNRAPTLHRLGIQAFEPVLVEGRAIKLHPLVCTAYNADFDGDQMAVHVPLSMEAQAEARFLMLAANNILKPQDGKPVMTPTQDMVLGCYYLTADEEGVQGEGKYFSSPEEAITAYQLGYIHIHAKIKVKMTKEIDGVKKSKIIETTVGKIIFNEAIPQDLGYVDRTNPETAFDLEINDLVDKSKLGKILDRVYRLHGPTKTAETLDKIKELGFRYSTKAAITVSVSDMVIPKEKEKLLKEADEMVSKIESQFRRGLISEEERYESIIRTWNMTTEKVTEALMTSLDKFNPIFMMAHSGARGSKNQIRQLAGMRGLMADPSGRIIELPIRSNFREGLNVLEFFISTHGARKGLADTALRTADSGYLTRRLVDVSQDVIVREEDCGTDEGIYVEEIREGNEIIERLADRIIGRVAAEDVVDNEGKIIVRRNELINEEEAEKIEKAGITKVKIRSLLTCKSRHGVCRMCYGRDLATGELVNIGEAVGIIAAQAIGEPGTQLTMRTFHTGGVAGSDITQGLPRVEELFEARKPKGLAVISEISGVVRINESKKRREVIVTDEENSISKTYLIPYGSRLKVHDGQVIQAGDELTEGSVNPHDLLKIKGIFAVQTYLLQEVQKVYRLQGVEINDKHIEVIIRQMMRKVKVEDPGDTSMLPGELIDMFKFEEENKKAVEKGLKPATGRRALLGITKAALATDSFLSAASFQETTRVLTDAAIKGKVDPLLGLKENVIIGKLIPAGTGLSRYRNISVVKKVKDQQDAQDKEKEEAEVKASN</sequence>
<protein>
    <recommendedName>
        <fullName evidence="1">DNA-directed RNA polymerase subunit beta'</fullName>
        <shortName evidence="1">RNAP subunit beta'</shortName>
        <ecNumber evidence="1">2.7.7.6</ecNumber>
    </recommendedName>
    <alternativeName>
        <fullName evidence="1">RNA polymerase subunit beta'</fullName>
    </alternativeName>
    <alternativeName>
        <fullName evidence="1">Transcriptase subunit beta'</fullName>
    </alternativeName>
</protein>
<reference key="1">
    <citation type="submission" date="2008-01" db="EMBL/GenBank/DDBJ databases">
        <title>Complete sequence of Thermoanaerobacter sp. X514.</title>
        <authorList>
            <consortium name="US DOE Joint Genome Institute"/>
            <person name="Copeland A."/>
            <person name="Lucas S."/>
            <person name="Lapidus A."/>
            <person name="Barry K."/>
            <person name="Glavina del Rio T."/>
            <person name="Dalin E."/>
            <person name="Tice H."/>
            <person name="Pitluck S."/>
            <person name="Bruce D."/>
            <person name="Goodwin L."/>
            <person name="Saunders E."/>
            <person name="Brettin T."/>
            <person name="Detter J.C."/>
            <person name="Han C."/>
            <person name="Schmutz J."/>
            <person name="Larimer F."/>
            <person name="Land M."/>
            <person name="Hauser L."/>
            <person name="Kyrpides N."/>
            <person name="Kim E."/>
            <person name="Hemme C."/>
            <person name="Fields M.W."/>
            <person name="He Z."/>
            <person name="Zhou J."/>
            <person name="Richardson P."/>
        </authorList>
    </citation>
    <scope>NUCLEOTIDE SEQUENCE [LARGE SCALE GENOMIC DNA]</scope>
    <source>
        <strain>X514</strain>
    </source>
</reference>
<gene>
    <name evidence="1" type="primary">rpoC</name>
    <name type="ordered locus">Teth514_0860</name>
</gene>
<evidence type="ECO:0000255" key="1">
    <source>
        <dbReference type="HAMAP-Rule" id="MF_01322"/>
    </source>
</evidence>
<evidence type="ECO:0000305" key="2"/>
<organism>
    <name type="scientific">Thermoanaerobacter sp. (strain X514)</name>
    <dbReference type="NCBI Taxonomy" id="399726"/>
    <lineage>
        <taxon>Bacteria</taxon>
        <taxon>Bacillati</taxon>
        <taxon>Bacillota</taxon>
        <taxon>Clostridia</taxon>
        <taxon>Thermoanaerobacterales</taxon>
        <taxon>Thermoanaerobacteraceae</taxon>
        <taxon>Thermoanaerobacter</taxon>
    </lineage>
</organism>
<comment type="function">
    <text evidence="1">DNA-dependent RNA polymerase catalyzes the transcription of DNA into RNA using the four ribonucleoside triphosphates as substrates.</text>
</comment>
<comment type="catalytic activity">
    <reaction evidence="1">
        <text>RNA(n) + a ribonucleoside 5'-triphosphate = RNA(n+1) + diphosphate</text>
        <dbReference type="Rhea" id="RHEA:21248"/>
        <dbReference type="Rhea" id="RHEA-COMP:14527"/>
        <dbReference type="Rhea" id="RHEA-COMP:17342"/>
        <dbReference type="ChEBI" id="CHEBI:33019"/>
        <dbReference type="ChEBI" id="CHEBI:61557"/>
        <dbReference type="ChEBI" id="CHEBI:140395"/>
        <dbReference type="EC" id="2.7.7.6"/>
    </reaction>
</comment>
<comment type="cofactor">
    <cofactor evidence="1">
        <name>Mg(2+)</name>
        <dbReference type="ChEBI" id="CHEBI:18420"/>
    </cofactor>
    <text evidence="1">Binds 1 Mg(2+) ion per subunit.</text>
</comment>
<comment type="cofactor">
    <cofactor evidence="1">
        <name>Zn(2+)</name>
        <dbReference type="ChEBI" id="CHEBI:29105"/>
    </cofactor>
    <text evidence="1">Binds 2 Zn(2+) ions per subunit.</text>
</comment>
<comment type="subunit">
    <text evidence="1">The RNAP catalytic core consists of 2 alpha, 1 beta, 1 beta' and 1 omega subunit. When a sigma factor is associated with the core the holoenzyme is formed, which can initiate transcription.</text>
</comment>
<comment type="similarity">
    <text evidence="1">Belongs to the RNA polymerase beta' chain family.</text>
</comment>
<comment type="sequence caution" evidence="2">
    <conflict type="erroneous initiation">
        <sequence resource="EMBL-CDS" id="ABY92162"/>
    </conflict>
    <text>Truncated N-terminus.</text>
</comment>
<name>RPOC_THEPX</name>
<proteinExistence type="inferred from homology"/>